<sequence>MTVPATKKDLMIINMGPHHPSMHGVLRLIVTLDGEDVIDCEPILGYLHRGMEKIAENRTIIQYLPYVTRWDYLATMFTEAITVNAPEQLGNIQVPKRASYIRVIMLELSRIASHLLWLGPFMADIGAQTPFFYIFRERELLYDLFEAATGMRMMHNYFRIGGVAADLPHGWIDKCLDFCDYSLTGVVEYQKLITRNPIFLERVEEVGIIGGEEAINWGLSGPMLRASGIQWDLRKVDHYECYDEFDWEVQWQKEGDSLARYLVRISEMTESIKILQQALEGIPGGPYENLEVRRFDRAKDSEWNDFEYRFISKKPSPTFELLKQELYVRVEAPKGELGIFLIGDNSVFPWRWKIRPPGFINLQILPQLVKRMKLADIMTILGSIDIIMGEVDR</sequence>
<accession>Q06GU0</accession>
<gene>
    <name evidence="1" type="primary">ndhH</name>
</gene>
<comment type="function">
    <text evidence="1">NDH shuttles electrons from NAD(P)H:plastoquinone, via FMN and iron-sulfur (Fe-S) centers, to quinones in the photosynthetic chain and possibly in a chloroplast respiratory chain. The immediate electron acceptor for the enzyme in this species is believed to be plastoquinone. Couples the redox reaction to proton translocation, and thus conserves the redox energy in a proton gradient.</text>
</comment>
<comment type="catalytic activity">
    <reaction evidence="1">
        <text>a plastoquinone + NADH + (n+1) H(+)(in) = a plastoquinol + NAD(+) + n H(+)(out)</text>
        <dbReference type="Rhea" id="RHEA:42608"/>
        <dbReference type="Rhea" id="RHEA-COMP:9561"/>
        <dbReference type="Rhea" id="RHEA-COMP:9562"/>
        <dbReference type="ChEBI" id="CHEBI:15378"/>
        <dbReference type="ChEBI" id="CHEBI:17757"/>
        <dbReference type="ChEBI" id="CHEBI:57540"/>
        <dbReference type="ChEBI" id="CHEBI:57945"/>
        <dbReference type="ChEBI" id="CHEBI:62192"/>
    </reaction>
</comment>
<comment type="catalytic activity">
    <reaction evidence="1">
        <text>a plastoquinone + NADPH + (n+1) H(+)(in) = a plastoquinol + NADP(+) + n H(+)(out)</text>
        <dbReference type="Rhea" id="RHEA:42612"/>
        <dbReference type="Rhea" id="RHEA-COMP:9561"/>
        <dbReference type="Rhea" id="RHEA-COMP:9562"/>
        <dbReference type="ChEBI" id="CHEBI:15378"/>
        <dbReference type="ChEBI" id="CHEBI:17757"/>
        <dbReference type="ChEBI" id="CHEBI:57783"/>
        <dbReference type="ChEBI" id="CHEBI:58349"/>
        <dbReference type="ChEBI" id="CHEBI:62192"/>
    </reaction>
</comment>
<comment type="subunit">
    <text evidence="1">NDH is composed of at least 16 different subunits, 5 of which are encoded in the nucleus.</text>
</comment>
<comment type="subcellular location">
    <subcellularLocation>
        <location evidence="1">Plastid</location>
        <location evidence="1">Chloroplast thylakoid membrane</location>
        <topology evidence="1">Peripheral membrane protein</topology>
        <orientation evidence="1">Stromal side</orientation>
    </subcellularLocation>
</comment>
<comment type="similarity">
    <text evidence="1">Belongs to the complex I 49 kDa subunit family.</text>
</comment>
<feature type="chain" id="PRO_0000357987" description="NAD(P)H-quinone oxidoreductase subunit H, chloroplastic">
    <location>
        <begin position="1"/>
        <end position="393"/>
    </location>
</feature>
<name>NDHH_DRIGR</name>
<organism>
    <name type="scientific">Drimys granadensis</name>
    <dbReference type="NCBI Taxonomy" id="224735"/>
    <lineage>
        <taxon>Eukaryota</taxon>
        <taxon>Viridiplantae</taxon>
        <taxon>Streptophyta</taxon>
        <taxon>Embryophyta</taxon>
        <taxon>Tracheophyta</taxon>
        <taxon>Spermatophyta</taxon>
        <taxon>Magnoliopsida</taxon>
        <taxon>Magnoliidae</taxon>
        <taxon>Canellales</taxon>
        <taxon>Winteraceae</taxon>
        <taxon>Drimys</taxon>
    </lineage>
</organism>
<keyword id="KW-0150">Chloroplast</keyword>
<keyword id="KW-0472">Membrane</keyword>
<keyword id="KW-0520">NAD</keyword>
<keyword id="KW-0521">NADP</keyword>
<keyword id="KW-0934">Plastid</keyword>
<keyword id="KW-0618">Plastoquinone</keyword>
<keyword id="KW-0874">Quinone</keyword>
<keyword id="KW-0793">Thylakoid</keyword>
<keyword id="KW-1278">Translocase</keyword>
<keyword id="KW-0813">Transport</keyword>
<proteinExistence type="inferred from homology"/>
<evidence type="ECO:0000255" key="1">
    <source>
        <dbReference type="HAMAP-Rule" id="MF_01358"/>
    </source>
</evidence>
<geneLocation type="chloroplast"/>
<dbReference type="EC" id="7.1.1.-" evidence="1"/>
<dbReference type="EMBL" id="DQ887676">
    <property type="protein sequence ID" value="ABH88354.1"/>
    <property type="molecule type" value="Genomic_DNA"/>
</dbReference>
<dbReference type="RefSeq" id="YP_784443.1">
    <property type="nucleotide sequence ID" value="NC_008456.1"/>
</dbReference>
<dbReference type="SMR" id="Q06GU0"/>
<dbReference type="GeneID" id="4363564"/>
<dbReference type="GO" id="GO:0009535">
    <property type="term" value="C:chloroplast thylakoid membrane"/>
    <property type="evidence" value="ECO:0007669"/>
    <property type="project" value="UniProtKB-SubCell"/>
</dbReference>
<dbReference type="GO" id="GO:0051287">
    <property type="term" value="F:NAD binding"/>
    <property type="evidence" value="ECO:0007669"/>
    <property type="project" value="InterPro"/>
</dbReference>
<dbReference type="GO" id="GO:0016655">
    <property type="term" value="F:oxidoreductase activity, acting on NAD(P)H, quinone or similar compound as acceptor"/>
    <property type="evidence" value="ECO:0007669"/>
    <property type="project" value="UniProtKB-UniRule"/>
</dbReference>
<dbReference type="GO" id="GO:0048038">
    <property type="term" value="F:quinone binding"/>
    <property type="evidence" value="ECO:0007669"/>
    <property type="project" value="UniProtKB-KW"/>
</dbReference>
<dbReference type="GO" id="GO:0019684">
    <property type="term" value="P:photosynthesis, light reaction"/>
    <property type="evidence" value="ECO:0007669"/>
    <property type="project" value="UniProtKB-UniRule"/>
</dbReference>
<dbReference type="FunFam" id="1.10.645.10:FF:000003">
    <property type="entry name" value="NAD(P)H-quinone oxidoreductase subunit H, chloroplastic"/>
    <property type="match status" value="1"/>
</dbReference>
<dbReference type="Gene3D" id="1.10.645.10">
    <property type="entry name" value="Cytochrome-c3 Hydrogenase, chain B"/>
    <property type="match status" value="1"/>
</dbReference>
<dbReference type="HAMAP" id="MF_01358">
    <property type="entry name" value="NDH1_NuoD"/>
    <property type="match status" value="1"/>
</dbReference>
<dbReference type="InterPro" id="IPR001135">
    <property type="entry name" value="NADH_Q_OxRdtase_suD"/>
</dbReference>
<dbReference type="InterPro" id="IPR014029">
    <property type="entry name" value="NADH_UbQ_OxRdtase_49kDa_CS"/>
</dbReference>
<dbReference type="InterPro" id="IPR022885">
    <property type="entry name" value="NDH1_su_D/H"/>
</dbReference>
<dbReference type="InterPro" id="IPR029014">
    <property type="entry name" value="NiFe-Hase_large"/>
</dbReference>
<dbReference type="NCBIfam" id="NF004739">
    <property type="entry name" value="PRK06075.1"/>
    <property type="match status" value="1"/>
</dbReference>
<dbReference type="NCBIfam" id="NF005649">
    <property type="entry name" value="PRK07415.1"/>
    <property type="match status" value="1"/>
</dbReference>
<dbReference type="PANTHER" id="PTHR11993:SF10">
    <property type="entry name" value="NADH DEHYDROGENASE [UBIQUINONE] IRON-SULFUR PROTEIN 2, MITOCHONDRIAL"/>
    <property type="match status" value="1"/>
</dbReference>
<dbReference type="PANTHER" id="PTHR11993">
    <property type="entry name" value="NADH-UBIQUINONE OXIDOREDUCTASE 49 KDA SUBUNIT"/>
    <property type="match status" value="1"/>
</dbReference>
<dbReference type="Pfam" id="PF00346">
    <property type="entry name" value="Complex1_49kDa"/>
    <property type="match status" value="1"/>
</dbReference>
<dbReference type="SUPFAM" id="SSF56762">
    <property type="entry name" value="HydB/Nqo4-like"/>
    <property type="match status" value="1"/>
</dbReference>
<dbReference type="PROSITE" id="PS00535">
    <property type="entry name" value="COMPLEX1_49K"/>
    <property type="match status" value="1"/>
</dbReference>
<reference key="1">
    <citation type="journal article" date="2006" name="BMC Evol. Biol.">
        <title>Complete plastid genome sequences of Drimys, Liriodendron, and Piper: implications for the phylogenetic relationships of magnoliids.</title>
        <authorList>
            <person name="Cai Z."/>
            <person name="Penaflor C."/>
            <person name="Kuehl J.V."/>
            <person name="Leebens-Mack J."/>
            <person name="Carlson J.E."/>
            <person name="dePamphilis C.W."/>
            <person name="Boore J.L."/>
            <person name="Jansen R.K."/>
        </authorList>
    </citation>
    <scope>NUCLEOTIDE SEQUENCE [LARGE SCALE GENOMIC DNA]</scope>
</reference>
<protein>
    <recommendedName>
        <fullName evidence="1">NAD(P)H-quinone oxidoreductase subunit H, chloroplastic</fullName>
        <ecNumber evidence="1">7.1.1.-</ecNumber>
    </recommendedName>
    <alternativeName>
        <fullName>NAD(P)H dehydrogenase subunit H</fullName>
    </alternativeName>
    <alternativeName>
        <fullName evidence="1">NADH-plastoquinone oxidoreductase 49 kDa subunit</fullName>
    </alternativeName>
    <alternativeName>
        <fullName evidence="1">NADH-plastoquinone oxidoreductase subunit H</fullName>
    </alternativeName>
</protein>